<protein>
    <recommendedName>
        <fullName>E3 SUMO-protein ligase EGR2</fullName>
        <ecNumber evidence="2">2.3.2.-</ecNumber>
    </recommendedName>
    <alternativeName>
        <fullName evidence="4">E3 SUMO-protein transferase ERG2</fullName>
    </alternativeName>
    <alternativeName>
        <fullName>Early growth response protein 2</fullName>
        <shortName>EGR-2</shortName>
    </alternativeName>
    <alternativeName>
        <fullName>Zinc finger protein Krox-20</fullName>
    </alternativeName>
</protein>
<keyword id="KW-0007">Acetylation</keyword>
<keyword id="KW-0010">Activator</keyword>
<keyword id="KW-0238">DNA-binding</keyword>
<keyword id="KW-0479">Metal-binding</keyword>
<keyword id="KW-0539">Nucleus</keyword>
<keyword id="KW-0677">Repeat</keyword>
<keyword id="KW-0804">Transcription</keyword>
<keyword id="KW-0805">Transcription regulation</keyword>
<keyword id="KW-0808">Transferase</keyword>
<keyword id="KW-0832">Ubl conjugation</keyword>
<keyword id="KW-0833">Ubl conjugation pathway</keyword>
<keyword id="KW-0862">Zinc</keyword>
<keyword id="KW-0863">Zinc-finger</keyword>
<sequence length="62" mass="7176">AEGCDRRFSASDELTRHIRIHTGHKPFQCAICMRNFSRSDHLTTHIRTHTGEKPFACDYCGR</sequence>
<evidence type="ECO:0000250" key="1">
    <source>
        <dbReference type="UniProtKB" id="P08152"/>
    </source>
</evidence>
<evidence type="ECO:0000250" key="2">
    <source>
        <dbReference type="UniProtKB" id="P11161"/>
    </source>
</evidence>
<evidence type="ECO:0000255" key="3">
    <source>
        <dbReference type="PROSITE-ProRule" id="PRU00042"/>
    </source>
</evidence>
<evidence type="ECO:0000305" key="4"/>
<feature type="chain" id="PRO_0000047118" description="E3 SUMO-protein ligase EGR2">
    <location>
        <begin position="1" status="less than"/>
        <end position="62" status="greater than"/>
    </location>
</feature>
<feature type="zinc finger region" description="C2H2-type 1" evidence="3">
    <location>
        <begin position="1" status="less than"/>
        <end position="21"/>
    </location>
</feature>
<feature type="zinc finger region" description="C2H2-type 2" evidence="3">
    <location>
        <begin position="27"/>
        <end position="49"/>
    </location>
</feature>
<feature type="zinc finger region" description="C2H2-type 3" evidence="3">
    <location>
        <begin position="55"/>
        <end position="62" status="greater than"/>
    </location>
</feature>
<feature type="non-terminal residue">
    <location>
        <position position="1"/>
    </location>
</feature>
<feature type="non-terminal residue">
    <location>
        <position position="62"/>
    </location>
</feature>
<dbReference type="EC" id="2.3.2.-" evidence="2"/>
<dbReference type="EMBL" id="M81106">
    <property type="protein sequence ID" value="AAA30905.1"/>
    <property type="molecule type" value="Genomic_DNA"/>
</dbReference>
<dbReference type="PIR" id="PQ0235">
    <property type="entry name" value="PQ0235"/>
</dbReference>
<dbReference type="SMR" id="P26634"/>
<dbReference type="UniPathway" id="UPA00886"/>
<dbReference type="GO" id="GO:0005737">
    <property type="term" value="C:cytoplasm"/>
    <property type="evidence" value="ECO:0000250"/>
    <property type="project" value="UniProtKB"/>
</dbReference>
<dbReference type="GO" id="GO:0005634">
    <property type="term" value="C:nucleus"/>
    <property type="evidence" value="ECO:0000250"/>
    <property type="project" value="UniProtKB"/>
</dbReference>
<dbReference type="GO" id="GO:0003682">
    <property type="term" value="F:chromatin binding"/>
    <property type="evidence" value="ECO:0000250"/>
    <property type="project" value="UniProtKB"/>
</dbReference>
<dbReference type="GO" id="GO:0003700">
    <property type="term" value="F:DNA-binding transcription factor activity"/>
    <property type="evidence" value="ECO:0000250"/>
    <property type="project" value="UniProtKB"/>
</dbReference>
<dbReference type="GO" id="GO:0000981">
    <property type="term" value="F:DNA-binding transcription factor activity, RNA polymerase II-specific"/>
    <property type="evidence" value="ECO:0000250"/>
    <property type="project" value="UniProtKB"/>
</dbReference>
<dbReference type="GO" id="GO:0000978">
    <property type="term" value="F:RNA polymerase II cis-regulatory region sequence-specific DNA binding"/>
    <property type="evidence" value="ECO:0007669"/>
    <property type="project" value="TreeGrafter"/>
</dbReference>
<dbReference type="GO" id="GO:0043565">
    <property type="term" value="F:sequence-specific DNA binding"/>
    <property type="evidence" value="ECO:0000250"/>
    <property type="project" value="UniProtKB"/>
</dbReference>
<dbReference type="GO" id="GO:0000976">
    <property type="term" value="F:transcription cis-regulatory region binding"/>
    <property type="evidence" value="ECO:0000250"/>
    <property type="project" value="UniProtKB"/>
</dbReference>
<dbReference type="GO" id="GO:0016740">
    <property type="term" value="F:transferase activity"/>
    <property type="evidence" value="ECO:0007669"/>
    <property type="project" value="UniProtKB-KW"/>
</dbReference>
<dbReference type="GO" id="GO:0008270">
    <property type="term" value="F:zinc ion binding"/>
    <property type="evidence" value="ECO:0007669"/>
    <property type="project" value="UniProtKB-KW"/>
</dbReference>
<dbReference type="GO" id="GO:0021612">
    <property type="term" value="P:facial nerve structural organization"/>
    <property type="evidence" value="ECO:0000250"/>
    <property type="project" value="UniProtKB"/>
</dbReference>
<dbReference type="GO" id="GO:0045893">
    <property type="term" value="P:positive regulation of DNA-templated transcription"/>
    <property type="evidence" value="ECO:0000250"/>
    <property type="project" value="UniProtKB"/>
</dbReference>
<dbReference type="GO" id="GO:0031643">
    <property type="term" value="P:positive regulation of myelination"/>
    <property type="evidence" value="ECO:0000250"/>
    <property type="project" value="UniProtKB"/>
</dbReference>
<dbReference type="GO" id="GO:0014040">
    <property type="term" value="P:positive regulation of Schwann cell differentiation"/>
    <property type="evidence" value="ECO:0000250"/>
    <property type="project" value="UniProtKB"/>
</dbReference>
<dbReference type="GO" id="GO:0045944">
    <property type="term" value="P:positive regulation of transcription by RNA polymerase II"/>
    <property type="evidence" value="ECO:0000250"/>
    <property type="project" value="UniProtKB"/>
</dbReference>
<dbReference type="GO" id="GO:0006611">
    <property type="term" value="P:protein export from nucleus"/>
    <property type="evidence" value="ECO:0000250"/>
    <property type="project" value="UniProtKB"/>
</dbReference>
<dbReference type="GO" id="GO:0016925">
    <property type="term" value="P:protein sumoylation"/>
    <property type="evidence" value="ECO:0007669"/>
    <property type="project" value="UniProtKB-UniPathway"/>
</dbReference>
<dbReference type="GO" id="GO:0021659">
    <property type="term" value="P:rhombomere 3 structural organization"/>
    <property type="evidence" value="ECO:0000250"/>
    <property type="project" value="UniProtKB"/>
</dbReference>
<dbReference type="GO" id="GO:0021665">
    <property type="term" value="P:rhombomere 5 structural organization"/>
    <property type="evidence" value="ECO:0000250"/>
    <property type="project" value="UniProtKB"/>
</dbReference>
<dbReference type="GO" id="GO:0014037">
    <property type="term" value="P:Schwann cell differentiation"/>
    <property type="evidence" value="ECO:0000250"/>
    <property type="project" value="UniProtKB"/>
</dbReference>
<dbReference type="GO" id="GO:0035914">
    <property type="term" value="P:skeletal muscle cell differentiation"/>
    <property type="evidence" value="ECO:0000250"/>
    <property type="project" value="UniProtKB"/>
</dbReference>
<dbReference type="FunFam" id="3.30.160.60:FF:003460">
    <property type="entry name" value="Early growth response protein 1"/>
    <property type="match status" value="1"/>
</dbReference>
<dbReference type="FunFam" id="3.30.160.60:FF:000419">
    <property type="entry name" value="Early growth response protein 4"/>
    <property type="match status" value="1"/>
</dbReference>
<dbReference type="Gene3D" id="3.30.160.60">
    <property type="entry name" value="Classic Zinc Finger"/>
    <property type="match status" value="3"/>
</dbReference>
<dbReference type="InterPro" id="IPR036236">
    <property type="entry name" value="Znf_C2H2_sf"/>
</dbReference>
<dbReference type="InterPro" id="IPR013087">
    <property type="entry name" value="Znf_C2H2_type"/>
</dbReference>
<dbReference type="PANTHER" id="PTHR23235:SF54">
    <property type="entry name" value="E3 SUMO-PROTEIN LIGASE EGR2"/>
    <property type="match status" value="1"/>
</dbReference>
<dbReference type="PANTHER" id="PTHR23235">
    <property type="entry name" value="KRUEPPEL-LIKE TRANSCRIPTION FACTOR"/>
    <property type="match status" value="1"/>
</dbReference>
<dbReference type="Pfam" id="PF00096">
    <property type="entry name" value="zf-C2H2"/>
    <property type="match status" value="2"/>
</dbReference>
<dbReference type="SMART" id="SM00355">
    <property type="entry name" value="ZnF_C2H2"/>
    <property type="match status" value="2"/>
</dbReference>
<dbReference type="SUPFAM" id="SSF57667">
    <property type="entry name" value="beta-beta-alpha zinc fingers"/>
    <property type="match status" value="1"/>
</dbReference>
<dbReference type="PROSITE" id="PS00028">
    <property type="entry name" value="ZINC_FINGER_C2H2_1"/>
    <property type="match status" value="1"/>
</dbReference>
<dbReference type="PROSITE" id="PS50157">
    <property type="entry name" value="ZINC_FINGER_C2H2_2"/>
    <property type="match status" value="2"/>
</dbReference>
<comment type="function">
    <text evidence="1">Sequence-specific DNA-binding transcription factor (By similarity). Plays a role in hindbrain segmentation by regulating the expression of a subset of homeobox containing genes and in Schwann cell myelination by regulating the expression of genes involved in the formation and maintenance of myelin (By similarity). Binds to two EGR2-consensus sites EGR2A (5'-CTGTAGGAG-3') and EGR2B (5'-ATGTAGGTG-3') in the HOXB3 enhancer and promotes HOXB3 transcriptional activation (By similarity). Binds to specific DNA sites located in the promoter region of HOXA4, HOXB2 and ERBB2 (By similarity). Regulates hindbrain segmentation by controlling the expression of Hox genes, such as HOXA4, HOXB3 and HOXB2, and thereby specifying odd and even rhombomeres (By similarity). Promotes the expression of HOXB3 in the rhombomere r5 in the hindbrain (By similarity). Regulates myelination in the peripheral nervous system after birth, possibly by regulating the expression of myelin proteins, such as MPZ, and by promoting the differentiation of Schwann cells (By similarity). Involved in the development of the jaw openener musculature, probably by playing a role in its innervation through trigeminal motor neurons (By similarity). May play a role in adipogenesis, possibly by regulating the expression of CEBPB (By similarity).</text>
</comment>
<comment type="function">
    <text evidence="2">E3 SUMO-protein ligase helping SUMO1 conjugation to its coregulators NAB1 and NAB2, whose sumoylation down-regulates EGR2 transcriptional activity.</text>
</comment>
<comment type="pathway">
    <text>Protein modification; protein sumoylation.</text>
</comment>
<comment type="subunit">
    <text evidence="1 2">Interacts with HCFC1 (By similarity). Interacts with WWP2 (By similarity). Interacts with UBC9 (By similarity). Interacts with CITED1 (By similarity). Interacts (via phosphorylated form) with SFN (By similarity).</text>
</comment>
<comment type="subcellular location">
    <subcellularLocation>
        <location evidence="1">Nucleus</location>
    </subcellularLocation>
</comment>
<comment type="PTM">
    <text evidence="1">Ubiquitinated by WWP2 leading to proteasomal degradation.</text>
</comment>
<comment type="PTM">
    <text evidence="1">Acetylated. May be deacetylated by HDAC6, HDAC10 or SIRT1.</text>
</comment>
<comment type="similarity">
    <text evidence="4">Belongs to the EGR C2H2-type zinc-finger protein family.</text>
</comment>
<proteinExistence type="inferred from homology"/>
<name>EGR2_CERTH</name>
<reference key="1">
    <citation type="journal article" date="1991" name="Biochem. Biophys. Res. Commun.">
        <title>Cloning of fish zinc-finger genes related to Krox-20 and Krox-24.</title>
        <authorList>
            <person name="Lanfear J."/>
            <person name="Jowett T."/>
            <person name="Holland P.W."/>
        </authorList>
    </citation>
    <scope>NUCLEOTIDE SEQUENCE [GENOMIC DNA]</scope>
</reference>
<organism>
    <name type="scientific">Cerdocyon thous</name>
    <name type="common">Crab-eating fox</name>
    <name type="synonym">Dusicyon thous</name>
    <dbReference type="NCBI Taxonomy" id="9620"/>
    <lineage>
        <taxon>Eukaryota</taxon>
        <taxon>Metazoa</taxon>
        <taxon>Chordata</taxon>
        <taxon>Craniata</taxon>
        <taxon>Vertebrata</taxon>
        <taxon>Euteleostomi</taxon>
        <taxon>Mammalia</taxon>
        <taxon>Eutheria</taxon>
        <taxon>Laurasiatheria</taxon>
        <taxon>Carnivora</taxon>
        <taxon>Caniformia</taxon>
        <taxon>Canidae</taxon>
        <taxon>Cerdocyon</taxon>
    </lineage>
</organism>
<gene>
    <name type="primary">EGR2</name>
    <name type="synonym">KROX20</name>
</gene>
<accession>P26634</accession>